<feature type="chain" id="PRO_0000104965" description="DNA-binding protein HU-like">
    <location>
        <begin position="1"/>
        <end position="80"/>
    </location>
</feature>
<organism>
    <name type="scientific">Rickettsia conorii (strain ATCC VR-613 / Malish 7)</name>
    <dbReference type="NCBI Taxonomy" id="272944"/>
    <lineage>
        <taxon>Bacteria</taxon>
        <taxon>Pseudomonadati</taxon>
        <taxon>Pseudomonadota</taxon>
        <taxon>Alphaproteobacteria</taxon>
        <taxon>Rickettsiales</taxon>
        <taxon>Rickettsiaceae</taxon>
        <taxon>Rickettsieae</taxon>
        <taxon>Rickettsia</taxon>
        <taxon>spotted fever group</taxon>
    </lineage>
</organism>
<reference key="1">
    <citation type="journal article" date="2001" name="Science">
        <title>Mechanisms of evolution in Rickettsia conorii and R. prowazekii.</title>
        <authorList>
            <person name="Ogata H."/>
            <person name="Audic S."/>
            <person name="Renesto-Audiffren P."/>
            <person name="Fournier P.-E."/>
            <person name="Barbe V."/>
            <person name="Samson D."/>
            <person name="Roux V."/>
            <person name="Cossart P."/>
            <person name="Weissenbach J."/>
            <person name="Claverie J.-M."/>
            <person name="Raoult D."/>
        </authorList>
    </citation>
    <scope>NUCLEOTIDE SEQUENCE [LARGE SCALE GENOMIC DNA]</scope>
    <source>
        <strain>ATCC VR-613 / Malish 7</strain>
    </source>
</reference>
<dbReference type="EMBL" id="AE006914">
    <property type="protein sequence ID" value="AAL03295.1"/>
    <property type="molecule type" value="Genomic_DNA"/>
</dbReference>
<dbReference type="PIR" id="E97794">
    <property type="entry name" value="E97794"/>
</dbReference>
<dbReference type="RefSeq" id="WP_010977374.1">
    <property type="nucleotide sequence ID" value="NC_003103.1"/>
</dbReference>
<dbReference type="SMR" id="Q92HL4"/>
<dbReference type="GeneID" id="927490"/>
<dbReference type="KEGG" id="rco:RC0757"/>
<dbReference type="PATRIC" id="fig|272944.4.peg.861"/>
<dbReference type="HOGENOM" id="CLU_2467017_0_0_5"/>
<dbReference type="Proteomes" id="UP000000816">
    <property type="component" value="Chromosome"/>
</dbReference>
<dbReference type="GO" id="GO:0005829">
    <property type="term" value="C:cytosol"/>
    <property type="evidence" value="ECO:0007669"/>
    <property type="project" value="TreeGrafter"/>
</dbReference>
<dbReference type="GO" id="GO:0003677">
    <property type="term" value="F:DNA binding"/>
    <property type="evidence" value="ECO:0007669"/>
    <property type="project" value="UniProtKB-KW"/>
</dbReference>
<dbReference type="GO" id="GO:0030527">
    <property type="term" value="F:structural constituent of chromatin"/>
    <property type="evidence" value="ECO:0007669"/>
    <property type="project" value="InterPro"/>
</dbReference>
<dbReference type="GO" id="GO:0030261">
    <property type="term" value="P:chromosome condensation"/>
    <property type="evidence" value="ECO:0007669"/>
    <property type="project" value="UniProtKB-KW"/>
</dbReference>
<dbReference type="Gene3D" id="4.10.520.10">
    <property type="entry name" value="IHF-like DNA-binding proteins"/>
    <property type="match status" value="1"/>
</dbReference>
<dbReference type="InterPro" id="IPR000119">
    <property type="entry name" value="Hist_DNA-bd"/>
</dbReference>
<dbReference type="InterPro" id="IPR010992">
    <property type="entry name" value="IHF-like_DNA-bd_dom_sf"/>
</dbReference>
<dbReference type="PANTHER" id="PTHR33175">
    <property type="entry name" value="DNA-BINDING PROTEIN HU"/>
    <property type="match status" value="1"/>
</dbReference>
<dbReference type="PANTHER" id="PTHR33175:SF3">
    <property type="entry name" value="DNA-BINDING PROTEIN HU-BETA"/>
    <property type="match status" value="1"/>
</dbReference>
<dbReference type="Pfam" id="PF00216">
    <property type="entry name" value="Bac_DNA_binding"/>
    <property type="match status" value="1"/>
</dbReference>
<dbReference type="SMART" id="SM00411">
    <property type="entry name" value="BHL"/>
    <property type="match status" value="1"/>
</dbReference>
<dbReference type="SUPFAM" id="SSF47729">
    <property type="entry name" value="IHF-like DNA-binding proteins"/>
    <property type="match status" value="1"/>
</dbReference>
<protein>
    <recommendedName>
        <fullName>DNA-binding protein HU-like</fullName>
    </recommendedName>
</protein>
<gene>
    <name type="ordered locus">RC0757</name>
</gene>
<evidence type="ECO:0000250" key="1"/>
<evidence type="ECO:0000305" key="2"/>
<sequence length="80" mass="9795">MITKNYLIDKIHDKLNCLSKEDVKDSVDLILDYLNESLKKQKRIEIRNFGNFSIRKRKFPESEKFYNTVYYRMPKNLFKE</sequence>
<name>DBHL_RICCN</name>
<proteinExistence type="inferred from homology"/>
<comment type="function">
    <text evidence="1">Histone-like DNA-binding protein which is capable of wrapping DNA to stabilize it, and thus to prevent its denaturation under extreme environmental conditions.</text>
</comment>
<comment type="similarity">
    <text evidence="2">Belongs to the bacterial histone-like protein family.</text>
</comment>
<keyword id="KW-0226">DNA condensation</keyword>
<keyword id="KW-0238">DNA-binding</keyword>
<accession>Q92HL4</accession>